<keyword id="KW-0001">2Fe-2S</keyword>
<keyword id="KW-0004">4Fe-4S</keyword>
<keyword id="KW-0093">Biotin biosynthesis</keyword>
<keyword id="KW-0408">Iron</keyword>
<keyword id="KW-0411">Iron-sulfur</keyword>
<keyword id="KW-0479">Metal-binding</keyword>
<keyword id="KW-0949">S-adenosyl-L-methionine</keyword>
<keyword id="KW-0808">Transferase</keyword>
<gene>
    <name evidence="1" type="primary">bioB</name>
    <name type="ordered locus">BruAb2_0730</name>
</gene>
<reference key="1">
    <citation type="journal article" date="2005" name="J. Bacteriol.">
        <title>Completion of the genome sequence of Brucella abortus and comparison to the highly similar genomes of Brucella melitensis and Brucella suis.</title>
        <authorList>
            <person name="Halling S.M."/>
            <person name="Peterson-Burch B.D."/>
            <person name="Bricker B.J."/>
            <person name="Zuerner R.L."/>
            <person name="Qing Z."/>
            <person name="Li L.-L."/>
            <person name="Kapur V."/>
            <person name="Alt D.P."/>
            <person name="Olsen S.C."/>
        </authorList>
    </citation>
    <scope>NUCLEOTIDE SEQUENCE [LARGE SCALE GENOMIC DNA]</scope>
    <source>
        <strain>9-941</strain>
    </source>
</reference>
<comment type="function">
    <text evidence="1">Catalyzes the conversion of dethiobiotin (DTB) to biotin by the insertion of a sulfur atom into dethiobiotin via a radical-based mechanism.</text>
</comment>
<comment type="catalytic activity">
    <reaction evidence="1">
        <text>(4R,5S)-dethiobiotin + (sulfur carrier)-SH + 2 reduced [2Fe-2S]-[ferredoxin] + 2 S-adenosyl-L-methionine = (sulfur carrier)-H + biotin + 2 5'-deoxyadenosine + 2 L-methionine + 2 oxidized [2Fe-2S]-[ferredoxin]</text>
        <dbReference type="Rhea" id="RHEA:22060"/>
        <dbReference type="Rhea" id="RHEA-COMP:10000"/>
        <dbReference type="Rhea" id="RHEA-COMP:10001"/>
        <dbReference type="Rhea" id="RHEA-COMP:14737"/>
        <dbReference type="Rhea" id="RHEA-COMP:14739"/>
        <dbReference type="ChEBI" id="CHEBI:17319"/>
        <dbReference type="ChEBI" id="CHEBI:29917"/>
        <dbReference type="ChEBI" id="CHEBI:33737"/>
        <dbReference type="ChEBI" id="CHEBI:33738"/>
        <dbReference type="ChEBI" id="CHEBI:57586"/>
        <dbReference type="ChEBI" id="CHEBI:57844"/>
        <dbReference type="ChEBI" id="CHEBI:59789"/>
        <dbReference type="ChEBI" id="CHEBI:64428"/>
        <dbReference type="ChEBI" id="CHEBI:149473"/>
        <dbReference type="EC" id="2.8.1.6"/>
    </reaction>
</comment>
<comment type="cofactor">
    <cofactor evidence="1">
        <name>[4Fe-4S] cluster</name>
        <dbReference type="ChEBI" id="CHEBI:49883"/>
    </cofactor>
    <text evidence="1">Binds 1 [4Fe-4S] cluster. The cluster is coordinated with 3 cysteines and an exchangeable S-adenosyl-L-methionine.</text>
</comment>
<comment type="cofactor">
    <cofactor evidence="1">
        <name>[2Fe-2S] cluster</name>
        <dbReference type="ChEBI" id="CHEBI:190135"/>
    </cofactor>
    <text evidence="1">Binds 1 [2Fe-2S] cluster. The cluster is coordinated with 3 cysteines and 1 arginine.</text>
</comment>
<comment type="pathway">
    <text evidence="1">Cofactor biosynthesis; biotin biosynthesis; biotin from 7,8-diaminononanoate: step 2/2.</text>
</comment>
<comment type="subunit">
    <text evidence="1">Homodimer.</text>
</comment>
<comment type="similarity">
    <text evidence="1">Belongs to the radical SAM superfamily. Biotin synthase family.</text>
</comment>
<comment type="sequence caution" evidence="3">
    <conflict type="erroneous initiation">
        <sequence resource="EMBL-CDS" id="AAX76136"/>
    </conflict>
</comment>
<evidence type="ECO:0000255" key="1">
    <source>
        <dbReference type="HAMAP-Rule" id="MF_01694"/>
    </source>
</evidence>
<evidence type="ECO:0000255" key="2">
    <source>
        <dbReference type="PROSITE-ProRule" id="PRU01266"/>
    </source>
</evidence>
<evidence type="ECO:0000305" key="3"/>
<organism>
    <name type="scientific">Brucella abortus biovar 1 (strain 9-941)</name>
    <dbReference type="NCBI Taxonomy" id="262698"/>
    <lineage>
        <taxon>Bacteria</taxon>
        <taxon>Pseudomonadati</taxon>
        <taxon>Pseudomonadota</taxon>
        <taxon>Alphaproteobacteria</taxon>
        <taxon>Hyphomicrobiales</taxon>
        <taxon>Brucellaceae</taxon>
        <taxon>Brucella/Ochrobactrum group</taxon>
        <taxon>Brucella</taxon>
    </lineage>
</organism>
<feature type="chain" id="PRO_0000381249" description="Biotin synthase">
    <location>
        <begin position="1"/>
        <end position="328"/>
    </location>
</feature>
<feature type="domain" description="Radical SAM core" evidence="2">
    <location>
        <begin position="48"/>
        <end position="275"/>
    </location>
</feature>
<feature type="binding site" evidence="1">
    <location>
        <position position="63"/>
    </location>
    <ligand>
        <name>[4Fe-4S] cluster</name>
        <dbReference type="ChEBI" id="CHEBI:49883"/>
        <note>4Fe-4S-S-AdoMet</note>
    </ligand>
</feature>
<feature type="binding site" evidence="1">
    <location>
        <position position="67"/>
    </location>
    <ligand>
        <name>[4Fe-4S] cluster</name>
        <dbReference type="ChEBI" id="CHEBI:49883"/>
        <note>4Fe-4S-S-AdoMet</note>
    </ligand>
</feature>
<feature type="binding site" evidence="1">
    <location>
        <position position="70"/>
    </location>
    <ligand>
        <name>[4Fe-4S] cluster</name>
        <dbReference type="ChEBI" id="CHEBI:49883"/>
        <note>4Fe-4S-S-AdoMet</note>
    </ligand>
</feature>
<feature type="binding site" evidence="1">
    <location>
        <position position="107"/>
    </location>
    <ligand>
        <name>[2Fe-2S] cluster</name>
        <dbReference type="ChEBI" id="CHEBI:190135"/>
    </ligand>
</feature>
<feature type="binding site" evidence="1">
    <location>
        <position position="138"/>
    </location>
    <ligand>
        <name>[2Fe-2S] cluster</name>
        <dbReference type="ChEBI" id="CHEBI:190135"/>
    </ligand>
</feature>
<feature type="binding site" evidence="1">
    <location>
        <position position="198"/>
    </location>
    <ligand>
        <name>[2Fe-2S] cluster</name>
        <dbReference type="ChEBI" id="CHEBI:190135"/>
    </ligand>
</feature>
<feature type="binding site" evidence="1">
    <location>
        <position position="270"/>
    </location>
    <ligand>
        <name>[2Fe-2S] cluster</name>
        <dbReference type="ChEBI" id="CHEBI:190135"/>
    </ligand>
</feature>
<protein>
    <recommendedName>
        <fullName evidence="1">Biotin synthase</fullName>
        <ecNumber evidence="1">2.8.1.6</ecNumber>
    </recommendedName>
</protein>
<name>BIOB_BRUAB</name>
<dbReference type="EC" id="2.8.1.6" evidence="1"/>
<dbReference type="EMBL" id="AE017224">
    <property type="protein sequence ID" value="AAX76136.1"/>
    <property type="status" value="ALT_INIT"/>
    <property type="molecule type" value="Genomic_DNA"/>
</dbReference>
<dbReference type="SMR" id="Q577P8"/>
<dbReference type="EnsemblBacteria" id="AAX76136">
    <property type="protein sequence ID" value="AAX76136"/>
    <property type="gene ID" value="BruAb2_0730"/>
</dbReference>
<dbReference type="KEGG" id="bmb:BruAb2_0730"/>
<dbReference type="HOGENOM" id="CLU_033172_1_2_5"/>
<dbReference type="UniPathway" id="UPA00078">
    <property type="reaction ID" value="UER00162"/>
</dbReference>
<dbReference type="Proteomes" id="UP000000540">
    <property type="component" value="Chromosome II"/>
</dbReference>
<dbReference type="GO" id="GO:0051537">
    <property type="term" value="F:2 iron, 2 sulfur cluster binding"/>
    <property type="evidence" value="ECO:0007669"/>
    <property type="project" value="UniProtKB-KW"/>
</dbReference>
<dbReference type="GO" id="GO:0051539">
    <property type="term" value="F:4 iron, 4 sulfur cluster binding"/>
    <property type="evidence" value="ECO:0007669"/>
    <property type="project" value="UniProtKB-KW"/>
</dbReference>
<dbReference type="GO" id="GO:0004076">
    <property type="term" value="F:biotin synthase activity"/>
    <property type="evidence" value="ECO:0007669"/>
    <property type="project" value="UniProtKB-UniRule"/>
</dbReference>
<dbReference type="GO" id="GO:0005506">
    <property type="term" value="F:iron ion binding"/>
    <property type="evidence" value="ECO:0007669"/>
    <property type="project" value="UniProtKB-UniRule"/>
</dbReference>
<dbReference type="GO" id="GO:0009102">
    <property type="term" value="P:biotin biosynthetic process"/>
    <property type="evidence" value="ECO:0007669"/>
    <property type="project" value="UniProtKB-UniRule"/>
</dbReference>
<dbReference type="CDD" id="cd01335">
    <property type="entry name" value="Radical_SAM"/>
    <property type="match status" value="1"/>
</dbReference>
<dbReference type="Gene3D" id="3.20.20.70">
    <property type="entry name" value="Aldolase class I"/>
    <property type="match status" value="1"/>
</dbReference>
<dbReference type="HAMAP" id="MF_01694">
    <property type="entry name" value="BioB"/>
    <property type="match status" value="1"/>
</dbReference>
<dbReference type="InterPro" id="IPR013785">
    <property type="entry name" value="Aldolase_TIM"/>
</dbReference>
<dbReference type="InterPro" id="IPR010722">
    <property type="entry name" value="BATS_dom"/>
</dbReference>
<dbReference type="InterPro" id="IPR002684">
    <property type="entry name" value="Biotin_synth/BioAB"/>
</dbReference>
<dbReference type="InterPro" id="IPR024177">
    <property type="entry name" value="Biotin_synthase"/>
</dbReference>
<dbReference type="InterPro" id="IPR006638">
    <property type="entry name" value="Elp3/MiaA/NifB-like_rSAM"/>
</dbReference>
<dbReference type="InterPro" id="IPR007197">
    <property type="entry name" value="rSAM"/>
</dbReference>
<dbReference type="NCBIfam" id="TIGR00433">
    <property type="entry name" value="bioB"/>
    <property type="match status" value="1"/>
</dbReference>
<dbReference type="PANTHER" id="PTHR22976">
    <property type="entry name" value="BIOTIN SYNTHASE"/>
    <property type="match status" value="1"/>
</dbReference>
<dbReference type="PANTHER" id="PTHR22976:SF2">
    <property type="entry name" value="BIOTIN SYNTHASE, MITOCHONDRIAL"/>
    <property type="match status" value="1"/>
</dbReference>
<dbReference type="Pfam" id="PF06968">
    <property type="entry name" value="BATS"/>
    <property type="match status" value="1"/>
</dbReference>
<dbReference type="Pfam" id="PF04055">
    <property type="entry name" value="Radical_SAM"/>
    <property type="match status" value="1"/>
</dbReference>
<dbReference type="PIRSF" id="PIRSF001619">
    <property type="entry name" value="Biotin_synth"/>
    <property type="match status" value="1"/>
</dbReference>
<dbReference type="SFLD" id="SFLDF00272">
    <property type="entry name" value="biotin_synthase"/>
    <property type="match status" value="1"/>
</dbReference>
<dbReference type="SFLD" id="SFLDS00029">
    <property type="entry name" value="Radical_SAM"/>
    <property type="match status" value="1"/>
</dbReference>
<dbReference type="SMART" id="SM00876">
    <property type="entry name" value="BATS"/>
    <property type="match status" value="1"/>
</dbReference>
<dbReference type="SMART" id="SM00729">
    <property type="entry name" value="Elp3"/>
    <property type="match status" value="1"/>
</dbReference>
<dbReference type="SUPFAM" id="SSF102114">
    <property type="entry name" value="Radical SAM enzymes"/>
    <property type="match status" value="1"/>
</dbReference>
<dbReference type="PROSITE" id="PS51918">
    <property type="entry name" value="RADICAL_SAM"/>
    <property type="match status" value="1"/>
</dbReference>
<accession>Q577P8</accession>
<sequence>MPDRGGENGASCSVGRWSAEEARAIYNLPFNDLLFRAHGLHRENFDPNRIQLSKLLNIKTGGCPEDCGYCSQSASAENGLKASKLMEIETVLEEARKAKAAGATRYCMGAAWRSPKDRDMPALTHMIESVKAMGLETCMTLGMLDSDKAEKLADAGLDYYNHNIDTSERFYPAVITTRSFEDRLDTLANVRNAGIKVCSGGILGLGEEAEDRIDMLVTLANLPEPPESVPINMLIPMPGTRLAKAAPVDPLEFVRVVALARILMPKSHVRLTAGRTAMSDEMQALCFFAGANSLFMGDTLLTAANPGDDRDSSLLRRLGIQAETEQPA</sequence>
<proteinExistence type="inferred from homology"/>